<comment type="function">
    <text evidence="1">Component of the BRCA1-A complex, a complex that specifically recognizes 'Lys-63'-linked ubiquitinated histones H2A and H2AX at DNA lesions sites, leading to target the BRCA1-BARD1 heterodimer to sites of DNA damage at double-strand breaks (DSBs). The BRCA1-A complex also possesses deubiquitinase activity that specifically removes 'Lys-63'-linked ubiquitin on histones H2A and H2AX. In the BRCA1-A complex, it acts as an adapter that bridges the interaction between BABAM1/NBA1 and the rest of the complex, thereby being required for the complex integrity and modulating the E3 ubiquitin ligase activity of the BRCA1-BARD1 heterodimer. Component of the BRISC complex, a multiprotein complex that specifically cleaves 'Lys-63'-linked ubiquitin in various substrates. Within the BRISC complex, acts as an adapter that bridges the interaction between BABAM1/NBA1 and the rest of the complex, thereby being required for the complex integrity. The BRISC complex is required for normal mitotic spindle assembly and microtubule attachment to kinetochores via its role in deubiquitinating NUMA1. The BRISC complex plays a role in interferon signaling via its role in the deubiquitination of the interferon receptor IFNAR1; deubiquitination increases IFNAR1 activity by enhancing its stability and cell surface expression. Down-regulates the response to bacterial lipopolysaccharide (LPS) via its role in IFNAR1 deubiquitination. May play a role in homeostasis or cellular differentiation in cells of neural, epithelial and germline origins. May also act as a death receptor-associated anti-apoptotic protein, which inhibits the mitochondrial apoptotic pathway. May regulate TNF-alpha signaling through its interactions with TNFRSF1A; however these effects may be indirect.</text>
</comment>
<comment type="subunit">
    <text evidence="1">Component of the ARISC complex, at least composed of UIMC1/RAP80, ABRAXAS1, BRCC3/BRCC36, BABAM2 and BABAM1/NBA1. Component of the BRCA1-A complex, at least composed of BRCA1, BARD1, UIMC1/RAP80, ABRAXAS1, BRCC3/BRCC36, BABAM2 and BABAM1/NBA1. In the BRCA1-A complex, interacts directly with ABRAXAS1, BRCC3/BRCC36 and BABAM1/NBA1. Binds polyubiquitin. Component of the BRISC complex, at least composed of ABRAXAS2, BRCC3/BRCC36, BABAM2 and BABAM1/NBA1. Identified in a complex with SHMT2 and the other subunits of the BRISC complex. Component of the BRCA1/BRCA2 containing complex (BRCC), which also contains BRCA1, BRCA2, BARD1, BRCC3/BRCC36 and RAD51. BRCC is a ubiquitin E3 ligase complex that enhances cellular survival following DNA damage. May interact with FAS and TNFRSF1A.</text>
</comment>
<comment type="subcellular location">
    <subcellularLocation>
        <location evidence="1">Cytoplasm</location>
    </subcellularLocation>
    <subcellularLocation>
        <location evidence="1">Nucleus</location>
    </subcellularLocation>
    <text evidence="1">Localizes at sites of DNA damage at double-strand breaks (DSBs).</text>
</comment>
<comment type="domain">
    <text evidence="1">Contains 2 ubiquitin-conjugating enzyme family-like (UEV-like) regions. These regions lack the critical Cys residues required for ubiquitination but retain the ability to bind ubiquitin.</text>
</comment>
<comment type="similarity">
    <text evidence="2">Belongs to the BABAM2 family.</text>
</comment>
<protein>
    <recommendedName>
        <fullName>BRISC and BRCA1-A complex member 2</fullName>
    </recommendedName>
    <alternativeName>
        <fullName>BRCA1-A complex subunit BRE</fullName>
    </alternativeName>
    <alternativeName>
        <fullName>BRCA1/BRCA2-containing complex subunit 45</fullName>
    </alternativeName>
    <alternativeName>
        <fullName>Brain and reproductive organ-expressed protein</fullName>
    </alternativeName>
</protein>
<keyword id="KW-0007">Acetylation</keyword>
<keyword id="KW-0053">Apoptosis</keyword>
<keyword id="KW-0131">Cell cycle</keyword>
<keyword id="KW-0132">Cell division</keyword>
<keyword id="KW-0156">Chromatin regulator</keyword>
<keyword id="KW-0963">Cytoplasm</keyword>
<keyword id="KW-0227">DNA damage</keyword>
<keyword id="KW-0234">DNA repair</keyword>
<keyword id="KW-0498">Mitosis</keyword>
<keyword id="KW-0539">Nucleus</keyword>
<keyword id="KW-0597">Phosphoprotein</keyword>
<keyword id="KW-1185">Reference proteome</keyword>
<keyword id="KW-0677">Repeat</keyword>
<keyword id="KW-0833">Ubl conjugation pathway</keyword>
<name>BABA2_MESAU</name>
<proteinExistence type="evidence at transcript level"/>
<organism>
    <name type="scientific">Mesocricetus auratus</name>
    <name type="common">Golden hamster</name>
    <dbReference type="NCBI Taxonomy" id="10036"/>
    <lineage>
        <taxon>Eukaryota</taxon>
        <taxon>Metazoa</taxon>
        <taxon>Chordata</taxon>
        <taxon>Craniata</taxon>
        <taxon>Vertebrata</taxon>
        <taxon>Euteleostomi</taxon>
        <taxon>Mammalia</taxon>
        <taxon>Eutheria</taxon>
        <taxon>Euarchontoglires</taxon>
        <taxon>Glires</taxon>
        <taxon>Rodentia</taxon>
        <taxon>Myomorpha</taxon>
        <taxon>Muroidea</taxon>
        <taxon>Cricetidae</taxon>
        <taxon>Cricetinae</taxon>
        <taxon>Mesocricetus</taxon>
    </lineage>
</organism>
<reference key="1">
    <citation type="submission" date="2001-10" db="EMBL/GenBank/DDBJ databases">
        <title>Comparison of mouse and primate BRE sequences.</title>
        <authorList>
            <person name="Ching A.K.K."/>
            <person name="Chui Y.L."/>
        </authorList>
    </citation>
    <scope>NUCLEOTIDE SEQUENCE [MRNA]</scope>
</reference>
<dbReference type="EMBL" id="AY454160">
    <property type="protein sequence ID" value="AAR21235.1"/>
    <property type="molecule type" value="mRNA"/>
</dbReference>
<dbReference type="RefSeq" id="NP_001268506.1">
    <property type="nucleotide sequence ID" value="NM_001281577.1"/>
</dbReference>
<dbReference type="SMR" id="Q6SP92"/>
<dbReference type="STRING" id="10036.ENSMAUP00000008469"/>
<dbReference type="GeneID" id="101827674"/>
<dbReference type="KEGG" id="maua:101827674"/>
<dbReference type="CTD" id="9577"/>
<dbReference type="eggNOG" id="ENOG502QUU0">
    <property type="taxonomic scope" value="Eukaryota"/>
</dbReference>
<dbReference type="OrthoDB" id="538811at2759"/>
<dbReference type="Proteomes" id="UP000189706">
    <property type="component" value="Unplaced"/>
</dbReference>
<dbReference type="GO" id="GO:0070531">
    <property type="term" value="C:BRCA1-A complex"/>
    <property type="evidence" value="ECO:0000250"/>
    <property type="project" value="UniProtKB"/>
</dbReference>
<dbReference type="GO" id="GO:0070552">
    <property type="term" value="C:BRISC complex"/>
    <property type="evidence" value="ECO:0000250"/>
    <property type="project" value="UniProtKB"/>
</dbReference>
<dbReference type="GO" id="GO:0005737">
    <property type="term" value="C:cytoplasm"/>
    <property type="evidence" value="ECO:0000250"/>
    <property type="project" value="UniProtKB"/>
</dbReference>
<dbReference type="GO" id="GO:0005634">
    <property type="term" value="C:nucleus"/>
    <property type="evidence" value="ECO:0000250"/>
    <property type="project" value="UniProtKB"/>
</dbReference>
<dbReference type="GO" id="GO:0031593">
    <property type="term" value="F:polyubiquitin modification-dependent protein binding"/>
    <property type="evidence" value="ECO:0000250"/>
    <property type="project" value="UniProtKB"/>
</dbReference>
<dbReference type="GO" id="GO:0006915">
    <property type="term" value="P:apoptotic process"/>
    <property type="evidence" value="ECO:0007669"/>
    <property type="project" value="UniProtKB-KW"/>
</dbReference>
<dbReference type="GO" id="GO:0051301">
    <property type="term" value="P:cell division"/>
    <property type="evidence" value="ECO:0007669"/>
    <property type="project" value="UniProtKB-KW"/>
</dbReference>
<dbReference type="GO" id="GO:0006325">
    <property type="term" value="P:chromatin organization"/>
    <property type="evidence" value="ECO:0007669"/>
    <property type="project" value="UniProtKB-KW"/>
</dbReference>
<dbReference type="GO" id="GO:0006302">
    <property type="term" value="P:double-strand break repair"/>
    <property type="evidence" value="ECO:0000250"/>
    <property type="project" value="UniProtKB"/>
</dbReference>
<dbReference type="GO" id="GO:0007095">
    <property type="term" value="P:mitotic G2 DNA damage checkpoint signaling"/>
    <property type="evidence" value="ECO:0000250"/>
    <property type="project" value="UniProtKB"/>
</dbReference>
<dbReference type="GO" id="GO:0045739">
    <property type="term" value="P:positive regulation of DNA repair"/>
    <property type="evidence" value="ECO:0000250"/>
    <property type="project" value="UniProtKB"/>
</dbReference>
<dbReference type="GO" id="GO:0010212">
    <property type="term" value="P:response to ionizing radiation"/>
    <property type="evidence" value="ECO:0000250"/>
    <property type="project" value="UniProtKB"/>
</dbReference>
<dbReference type="CDD" id="cd23664">
    <property type="entry name" value="BRE"/>
    <property type="match status" value="1"/>
</dbReference>
<dbReference type="InterPro" id="IPR010358">
    <property type="entry name" value="BRE"/>
</dbReference>
<dbReference type="PANTHER" id="PTHR15189">
    <property type="entry name" value="BRISC AND BRCA1-A COMPLEX MEMBER 2"/>
    <property type="match status" value="1"/>
</dbReference>
<dbReference type="PANTHER" id="PTHR15189:SF7">
    <property type="entry name" value="BRISC AND BRCA1-A COMPLEX MEMBER 2"/>
    <property type="match status" value="1"/>
</dbReference>
<dbReference type="Pfam" id="PF06113">
    <property type="entry name" value="BRE"/>
    <property type="match status" value="1"/>
</dbReference>
<accession>Q6SP92</accession>
<gene>
    <name type="primary">Babam2</name>
    <name type="synonym">Bre</name>
</gene>
<sequence>MSPEIALNRISPMLSPFISSVVRNGKVGLDATNCLRITDLKSGCTSLTPGPNCDRFKLHIPYAGESLKWDIIFNAQYPELPPDFIFGEDAEFLPDPSALHNLASWNPSDPECLLLVVKELVQQYHQFQCSRLRESSRLMFEYQTLLEEPQYGENMEIYAGKKNNWTGEFSARFLLKLPVDFSNIPTYLLKDVNEDPGEDVALLSVSFEDTEATQVYPKLYLSPRIEHALGGSSALHIPAFPGGGCLIDYVPQVCHLLTNKVQYVIQGYHKRREYIAAFLSHFGTGVVEYDAEGFTKLTLLLMWKDFCFLVHIDLPLFFPRDQPTLTFQSVYHFTNSGQLYSQAQKNYPYSPRWDGNEMAKRAKAYFKTFVPQFQEAAFANGKL</sequence>
<feature type="chain" id="PRO_0000373932" description="BRISC and BRCA1-A complex member 2">
    <location>
        <begin position="1"/>
        <end position="383"/>
    </location>
</feature>
<feature type="region of interest" description="UEV-like 1">
    <location>
        <begin position="30"/>
        <end position="147"/>
    </location>
</feature>
<feature type="region of interest" description="UEV-like 2">
    <location>
        <begin position="275"/>
        <end position="364"/>
    </location>
</feature>
<feature type="modified residue" description="N-acetylmethionine" evidence="1">
    <location>
        <position position="1"/>
    </location>
</feature>
<feature type="modified residue" description="Phosphoserine" evidence="1">
    <location>
        <position position="2"/>
    </location>
</feature>
<evidence type="ECO:0000250" key="1">
    <source>
        <dbReference type="UniProtKB" id="Q9NXR7"/>
    </source>
</evidence>
<evidence type="ECO:0000255" key="2"/>